<dbReference type="EMBL" id="AK006598">
    <property type="protein sequence ID" value="BAB24668.1"/>
    <property type="molecule type" value="mRNA"/>
</dbReference>
<dbReference type="EMBL" id="AK029686">
    <property type="protein sequence ID" value="BAC26563.1"/>
    <property type="molecule type" value="mRNA"/>
</dbReference>
<dbReference type="EMBL" id="AK076643">
    <property type="protein sequence ID" value="BAC36432.1"/>
    <property type="molecule type" value="mRNA"/>
</dbReference>
<dbReference type="EMBL" id="BC052362">
    <property type="protein sequence ID" value="AAH52362.1"/>
    <property type="molecule type" value="mRNA"/>
</dbReference>
<dbReference type="CCDS" id="CCDS51956.1">
    <molecule id="Q80W69-2"/>
</dbReference>
<dbReference type="CCDS" id="CCDS51957.1">
    <molecule id="Q80W69-1"/>
</dbReference>
<dbReference type="RefSeq" id="NP_001157708.1">
    <molecule id="Q80W69-2"/>
    <property type="nucleotide sequence ID" value="NM_001164236.1"/>
</dbReference>
<dbReference type="RefSeq" id="NP_082785.1">
    <molecule id="Q80W69-1"/>
    <property type="nucleotide sequence ID" value="NM_028509.1"/>
</dbReference>
<dbReference type="RefSeq" id="XP_006507175.1">
    <molecule id="Q80W69-1"/>
    <property type="nucleotide sequence ID" value="XM_006507112.4"/>
</dbReference>
<dbReference type="RefSeq" id="XP_011239934.1">
    <molecule id="Q80W69-1"/>
    <property type="nucleotide sequence ID" value="XM_011241632.3"/>
</dbReference>
<dbReference type="RefSeq" id="XP_017177265.1">
    <molecule id="Q80W69-1"/>
    <property type="nucleotide sequence ID" value="XM_017321776.2"/>
</dbReference>
<dbReference type="RefSeq" id="XP_030111486.1">
    <molecule id="Q80W69-2"/>
    <property type="nucleotide sequence ID" value="XM_030255626.1"/>
</dbReference>
<dbReference type="RefSeq" id="XP_036008242.1">
    <molecule id="Q80W69-2"/>
    <property type="nucleotide sequence ID" value="XM_036152349.1"/>
</dbReference>
<dbReference type="iPTMnet" id="Q80W69"/>
<dbReference type="PhosphoSitePlus" id="Q80W69"/>
<dbReference type="SwissPalm" id="Q80W69"/>
<dbReference type="PaxDb" id="10090-ENSMUSP00000043802"/>
<dbReference type="Antibodypedia" id="49080">
    <property type="antibodies" value="6 antibodies from 4 providers"/>
</dbReference>
<dbReference type="Ensembl" id="ENSMUST00000036592.15">
    <molecule id="Q80W69-1"/>
    <property type="protein sequence ID" value="ENSMUSP00000043802.9"/>
    <property type="gene ID" value="ENSMUSG00000040163.15"/>
</dbReference>
<dbReference type="Ensembl" id="ENSMUST00000111622.2">
    <molecule id="Q80W69-2"/>
    <property type="protein sequence ID" value="ENSMUSP00000107249.2"/>
    <property type="gene ID" value="ENSMUSG00000040163.15"/>
</dbReference>
<dbReference type="GeneID" id="73344"/>
<dbReference type="KEGG" id="mmu:73344"/>
<dbReference type="UCSC" id="uc009eso.2">
    <molecule id="Q80W69-1"/>
    <property type="organism name" value="mouse"/>
</dbReference>
<dbReference type="UCSC" id="uc012evt.1">
    <molecule id="Q80W69-2"/>
    <property type="organism name" value="mouse"/>
</dbReference>
<dbReference type="AGR" id="MGI:1920594"/>
<dbReference type="MGI" id="MGI:1920594">
    <property type="gene designation" value="1700034J05Rik"/>
</dbReference>
<dbReference type="VEuPathDB" id="HostDB:ENSMUSG00000040163"/>
<dbReference type="eggNOG" id="ENOG502RTYV">
    <property type="taxonomic scope" value="Eukaryota"/>
</dbReference>
<dbReference type="GeneTree" id="ENSGT00390000018322"/>
<dbReference type="HOGENOM" id="CLU_081160_0_0_1"/>
<dbReference type="InParanoid" id="Q80W69"/>
<dbReference type="OMA" id="PPIQGTW"/>
<dbReference type="OrthoDB" id="9450944at2759"/>
<dbReference type="TreeFam" id="TF338465"/>
<dbReference type="BioGRID-ORCS" id="73344">
    <property type="hits" value="3 hits in 77 CRISPR screens"/>
</dbReference>
<dbReference type="PRO" id="PR:Q80W69"/>
<dbReference type="Proteomes" id="UP000000589">
    <property type="component" value="Chromosome 6"/>
</dbReference>
<dbReference type="RNAct" id="Q80W69">
    <property type="molecule type" value="protein"/>
</dbReference>
<dbReference type="Bgee" id="ENSMUSG00000040163">
    <property type="expression patterns" value="Expressed in interventricular septum and 34 other cell types or tissues"/>
</dbReference>
<dbReference type="InterPro" id="IPR027908">
    <property type="entry name" value="DUF4640"/>
</dbReference>
<dbReference type="PANTHER" id="PTHR36462">
    <property type="entry name" value="CHROMOSOME 12 OPEN READING FRAME 71"/>
    <property type="match status" value="1"/>
</dbReference>
<dbReference type="PANTHER" id="PTHR36462:SF1">
    <property type="entry name" value="CHROMOSOME 12 OPEN READING FRAME 71"/>
    <property type="match status" value="1"/>
</dbReference>
<dbReference type="Pfam" id="PF15480">
    <property type="entry name" value="DUF4640"/>
    <property type="match status" value="1"/>
</dbReference>
<accession>Q80W69</accession>
<accession>Q8C629</accession>
<accession>Q8CDR6</accession>
<accession>Q9D9Q1</accession>
<sequence length="301" mass="34755">MTTSPSSSDYSSTEDSIYECKSNQSASVGYYPSENTFSYEDLVSREETASVDSLVHFLPPVQSTWRTESLRRLFRKRDQVEHDPEQFSKLSITLAWDIDVDSNHADSLANLDLNAHSQWMDKWPEDKTKLTPCKLYNLVQKLETFLGKEKGGQHDGCVLPESTQKEDVHLNSTTPPHTAQVSPKERDVCQDLSKQRSLENEDICQVLEDPPRLLKDEVVQEIRQASESSLETSSVSSPQPEGASRSHNIFCMNFRWVFQWLRTQIFSRWRRQRPSQATNTWHQKAVRNIHSLRSNRIQPQE</sequence>
<protein>
    <recommendedName>
        <fullName>Uncharacterized protein C12orf71 homolog</fullName>
    </recommendedName>
</protein>
<organism>
    <name type="scientific">Mus musculus</name>
    <name type="common">Mouse</name>
    <dbReference type="NCBI Taxonomy" id="10090"/>
    <lineage>
        <taxon>Eukaryota</taxon>
        <taxon>Metazoa</taxon>
        <taxon>Chordata</taxon>
        <taxon>Craniata</taxon>
        <taxon>Vertebrata</taxon>
        <taxon>Euteleostomi</taxon>
        <taxon>Mammalia</taxon>
        <taxon>Eutheria</taxon>
        <taxon>Euarchontoglires</taxon>
        <taxon>Glires</taxon>
        <taxon>Rodentia</taxon>
        <taxon>Myomorpha</taxon>
        <taxon>Muroidea</taxon>
        <taxon>Muridae</taxon>
        <taxon>Murinae</taxon>
        <taxon>Mus</taxon>
        <taxon>Mus</taxon>
    </lineage>
</organism>
<evidence type="ECO:0000256" key="1">
    <source>
        <dbReference type="SAM" id="MobiDB-lite"/>
    </source>
</evidence>
<evidence type="ECO:0000303" key="2">
    <source>
    </source>
</evidence>
<evidence type="ECO:0000305" key="3"/>
<feature type="chain" id="PRO_0000343578" description="Uncharacterized protein C12orf71 homolog">
    <location>
        <begin position="1"/>
        <end position="301"/>
    </location>
</feature>
<feature type="region of interest" description="Disordered" evidence="1">
    <location>
        <begin position="167"/>
        <end position="186"/>
    </location>
</feature>
<feature type="region of interest" description="Disordered" evidence="1">
    <location>
        <begin position="225"/>
        <end position="244"/>
    </location>
</feature>
<feature type="compositionally biased region" description="Polar residues" evidence="1">
    <location>
        <begin position="170"/>
        <end position="181"/>
    </location>
</feature>
<feature type="compositionally biased region" description="Low complexity" evidence="1">
    <location>
        <begin position="226"/>
        <end position="237"/>
    </location>
</feature>
<feature type="splice variant" id="VSP_034616" description="In isoform 2." evidence="2">
    <location>
        <position position="220"/>
    </location>
</feature>
<feature type="sequence conflict" description="In Ref. 1; BAB24668." evidence="3" ref="1">
    <original>F</original>
    <variation>I</variation>
    <location>
        <position position="57"/>
    </location>
</feature>
<feature type="sequence conflict" description="In Ref. 1; BAC26563." evidence="3" ref="1">
    <original>Q</original>
    <variation>H</variation>
    <location>
        <position position="164"/>
    </location>
</feature>
<feature type="sequence conflict" description="In Ref. 1; BAC26563." evidence="3" ref="1">
    <original>Q</original>
    <variation>H</variation>
    <location>
        <position position="180"/>
    </location>
</feature>
<feature type="sequence conflict" description="In Ref. 1; BAC26563." evidence="3" ref="1">
    <original>E</original>
    <variation>Q</variation>
    <location>
        <position position="199"/>
    </location>
</feature>
<comment type="alternative products">
    <event type="alternative splicing"/>
    <isoform>
        <id>Q80W69-1</id>
        <name>1</name>
        <sequence type="displayed"/>
    </isoform>
    <isoform>
        <id>Q80W69-2</id>
        <name>2</name>
        <sequence type="described" ref="VSP_034616"/>
    </isoform>
</comment>
<keyword id="KW-0025">Alternative splicing</keyword>
<keyword id="KW-1185">Reference proteome</keyword>
<name>CL071_MOUSE</name>
<reference key="1">
    <citation type="journal article" date="2005" name="Science">
        <title>The transcriptional landscape of the mammalian genome.</title>
        <authorList>
            <person name="Carninci P."/>
            <person name="Kasukawa T."/>
            <person name="Katayama S."/>
            <person name="Gough J."/>
            <person name="Frith M.C."/>
            <person name="Maeda N."/>
            <person name="Oyama R."/>
            <person name="Ravasi T."/>
            <person name="Lenhard B."/>
            <person name="Wells C."/>
            <person name="Kodzius R."/>
            <person name="Shimokawa K."/>
            <person name="Bajic V.B."/>
            <person name="Brenner S.E."/>
            <person name="Batalov S."/>
            <person name="Forrest A.R."/>
            <person name="Zavolan M."/>
            <person name="Davis M.J."/>
            <person name="Wilming L.G."/>
            <person name="Aidinis V."/>
            <person name="Allen J.E."/>
            <person name="Ambesi-Impiombato A."/>
            <person name="Apweiler R."/>
            <person name="Aturaliya R.N."/>
            <person name="Bailey T.L."/>
            <person name="Bansal M."/>
            <person name="Baxter L."/>
            <person name="Beisel K.W."/>
            <person name="Bersano T."/>
            <person name="Bono H."/>
            <person name="Chalk A.M."/>
            <person name="Chiu K.P."/>
            <person name="Choudhary V."/>
            <person name="Christoffels A."/>
            <person name="Clutterbuck D.R."/>
            <person name="Crowe M.L."/>
            <person name="Dalla E."/>
            <person name="Dalrymple B.P."/>
            <person name="de Bono B."/>
            <person name="Della Gatta G."/>
            <person name="di Bernardo D."/>
            <person name="Down T."/>
            <person name="Engstrom P."/>
            <person name="Fagiolini M."/>
            <person name="Faulkner G."/>
            <person name="Fletcher C.F."/>
            <person name="Fukushima T."/>
            <person name="Furuno M."/>
            <person name="Futaki S."/>
            <person name="Gariboldi M."/>
            <person name="Georgii-Hemming P."/>
            <person name="Gingeras T.R."/>
            <person name="Gojobori T."/>
            <person name="Green R.E."/>
            <person name="Gustincich S."/>
            <person name="Harbers M."/>
            <person name="Hayashi Y."/>
            <person name="Hensch T.K."/>
            <person name="Hirokawa N."/>
            <person name="Hill D."/>
            <person name="Huminiecki L."/>
            <person name="Iacono M."/>
            <person name="Ikeo K."/>
            <person name="Iwama A."/>
            <person name="Ishikawa T."/>
            <person name="Jakt M."/>
            <person name="Kanapin A."/>
            <person name="Katoh M."/>
            <person name="Kawasawa Y."/>
            <person name="Kelso J."/>
            <person name="Kitamura H."/>
            <person name="Kitano H."/>
            <person name="Kollias G."/>
            <person name="Krishnan S.P."/>
            <person name="Kruger A."/>
            <person name="Kummerfeld S.K."/>
            <person name="Kurochkin I.V."/>
            <person name="Lareau L.F."/>
            <person name="Lazarevic D."/>
            <person name="Lipovich L."/>
            <person name="Liu J."/>
            <person name="Liuni S."/>
            <person name="McWilliam S."/>
            <person name="Madan Babu M."/>
            <person name="Madera M."/>
            <person name="Marchionni L."/>
            <person name="Matsuda H."/>
            <person name="Matsuzawa S."/>
            <person name="Miki H."/>
            <person name="Mignone F."/>
            <person name="Miyake S."/>
            <person name="Morris K."/>
            <person name="Mottagui-Tabar S."/>
            <person name="Mulder N."/>
            <person name="Nakano N."/>
            <person name="Nakauchi H."/>
            <person name="Ng P."/>
            <person name="Nilsson R."/>
            <person name="Nishiguchi S."/>
            <person name="Nishikawa S."/>
            <person name="Nori F."/>
            <person name="Ohara O."/>
            <person name="Okazaki Y."/>
            <person name="Orlando V."/>
            <person name="Pang K.C."/>
            <person name="Pavan W.J."/>
            <person name="Pavesi G."/>
            <person name="Pesole G."/>
            <person name="Petrovsky N."/>
            <person name="Piazza S."/>
            <person name="Reed J."/>
            <person name="Reid J.F."/>
            <person name="Ring B.Z."/>
            <person name="Ringwald M."/>
            <person name="Rost B."/>
            <person name="Ruan Y."/>
            <person name="Salzberg S.L."/>
            <person name="Sandelin A."/>
            <person name="Schneider C."/>
            <person name="Schoenbach C."/>
            <person name="Sekiguchi K."/>
            <person name="Semple C.A."/>
            <person name="Seno S."/>
            <person name="Sessa L."/>
            <person name="Sheng Y."/>
            <person name="Shibata Y."/>
            <person name="Shimada H."/>
            <person name="Shimada K."/>
            <person name="Silva D."/>
            <person name="Sinclair B."/>
            <person name="Sperling S."/>
            <person name="Stupka E."/>
            <person name="Sugiura K."/>
            <person name="Sultana R."/>
            <person name="Takenaka Y."/>
            <person name="Taki K."/>
            <person name="Tammoja K."/>
            <person name="Tan S.L."/>
            <person name="Tang S."/>
            <person name="Taylor M.S."/>
            <person name="Tegner J."/>
            <person name="Teichmann S.A."/>
            <person name="Ueda H.R."/>
            <person name="van Nimwegen E."/>
            <person name="Verardo R."/>
            <person name="Wei C.L."/>
            <person name="Yagi K."/>
            <person name="Yamanishi H."/>
            <person name="Zabarovsky E."/>
            <person name="Zhu S."/>
            <person name="Zimmer A."/>
            <person name="Hide W."/>
            <person name="Bult C."/>
            <person name="Grimmond S.M."/>
            <person name="Teasdale R.D."/>
            <person name="Liu E.T."/>
            <person name="Brusic V."/>
            <person name="Quackenbush J."/>
            <person name="Wahlestedt C."/>
            <person name="Mattick J.S."/>
            <person name="Hume D.A."/>
            <person name="Kai C."/>
            <person name="Sasaki D."/>
            <person name="Tomaru Y."/>
            <person name="Fukuda S."/>
            <person name="Kanamori-Katayama M."/>
            <person name="Suzuki M."/>
            <person name="Aoki J."/>
            <person name="Arakawa T."/>
            <person name="Iida J."/>
            <person name="Imamura K."/>
            <person name="Itoh M."/>
            <person name="Kato T."/>
            <person name="Kawaji H."/>
            <person name="Kawagashira N."/>
            <person name="Kawashima T."/>
            <person name="Kojima M."/>
            <person name="Kondo S."/>
            <person name="Konno H."/>
            <person name="Nakano K."/>
            <person name="Ninomiya N."/>
            <person name="Nishio T."/>
            <person name="Okada M."/>
            <person name="Plessy C."/>
            <person name="Shibata K."/>
            <person name="Shiraki T."/>
            <person name="Suzuki S."/>
            <person name="Tagami M."/>
            <person name="Waki K."/>
            <person name="Watahiki A."/>
            <person name="Okamura-Oho Y."/>
            <person name="Suzuki H."/>
            <person name="Kawai J."/>
            <person name="Hayashizaki Y."/>
        </authorList>
    </citation>
    <scope>NUCLEOTIDE SEQUENCE [LARGE SCALE MRNA] (ISOFORMS 1 AND 2)</scope>
    <source>
        <strain>C57BL/6J</strain>
        <tissue>Testis</tissue>
    </source>
</reference>
<reference key="2">
    <citation type="journal article" date="2004" name="Genome Res.">
        <title>The status, quality, and expansion of the NIH full-length cDNA project: the Mammalian Gene Collection (MGC).</title>
        <authorList>
            <consortium name="The MGC Project Team"/>
        </authorList>
    </citation>
    <scope>NUCLEOTIDE SEQUENCE [LARGE SCALE MRNA] (ISOFORM 1)</scope>
    <source>
        <tissue>Testis</tissue>
    </source>
</reference>
<proteinExistence type="evidence at transcript level"/>